<feature type="chain" id="PRO_0000251498" description="Large ribosomal subunit protein uL15">
    <location>
        <begin position="1"/>
        <end position="146"/>
    </location>
</feature>
<feature type="region of interest" description="Disordered" evidence="2">
    <location>
        <begin position="1"/>
        <end position="56"/>
    </location>
</feature>
<feature type="compositionally biased region" description="Gly residues" evidence="2">
    <location>
        <begin position="21"/>
        <end position="35"/>
    </location>
</feature>
<feature type="compositionally biased region" description="Gly residues" evidence="2">
    <location>
        <begin position="42"/>
        <end position="52"/>
    </location>
</feature>
<protein>
    <recommendedName>
        <fullName evidence="1">Large ribosomal subunit protein uL15</fullName>
    </recommendedName>
    <alternativeName>
        <fullName evidence="3">50S ribosomal protein L15</fullName>
    </alternativeName>
</protein>
<accession>Q3A9T5</accession>
<gene>
    <name evidence="1" type="primary">rplO</name>
    <name type="ordered locus">CHY_2290</name>
</gene>
<reference key="1">
    <citation type="journal article" date="2005" name="PLoS Genet.">
        <title>Life in hot carbon monoxide: the complete genome sequence of Carboxydothermus hydrogenoformans Z-2901.</title>
        <authorList>
            <person name="Wu M."/>
            <person name="Ren Q."/>
            <person name="Durkin A.S."/>
            <person name="Daugherty S.C."/>
            <person name="Brinkac L.M."/>
            <person name="Dodson R.J."/>
            <person name="Madupu R."/>
            <person name="Sullivan S.A."/>
            <person name="Kolonay J.F."/>
            <person name="Nelson W.C."/>
            <person name="Tallon L.J."/>
            <person name="Jones K.M."/>
            <person name="Ulrich L.E."/>
            <person name="Gonzalez J.M."/>
            <person name="Zhulin I.B."/>
            <person name="Robb F.T."/>
            <person name="Eisen J.A."/>
        </authorList>
    </citation>
    <scope>NUCLEOTIDE SEQUENCE [LARGE SCALE GENOMIC DNA]</scope>
    <source>
        <strain>ATCC BAA-161 / DSM 6008 / Z-2901</strain>
    </source>
</reference>
<organism>
    <name type="scientific">Carboxydothermus hydrogenoformans (strain ATCC BAA-161 / DSM 6008 / Z-2901)</name>
    <dbReference type="NCBI Taxonomy" id="246194"/>
    <lineage>
        <taxon>Bacteria</taxon>
        <taxon>Bacillati</taxon>
        <taxon>Bacillota</taxon>
        <taxon>Clostridia</taxon>
        <taxon>Thermoanaerobacterales</taxon>
        <taxon>Thermoanaerobacteraceae</taxon>
        <taxon>Carboxydothermus</taxon>
    </lineage>
</organism>
<name>RL15_CARHZ</name>
<proteinExistence type="inferred from homology"/>
<sequence length="146" mass="15535">MRLHDLRPVPGSRQKPTRKGQGIGSGLGKTAGRGQKGQKARSGGGVRPGFEGGQMPLYRRLPKRGFHNKFAKEIIAINVDRLNKFEDGTVVTPELLLETGIIKKIGDGVKILGGGELKKALTVKAHAFSESAKEKITAAGGQAEVL</sequence>
<dbReference type="EMBL" id="CP000141">
    <property type="protein sequence ID" value="ABB14190.1"/>
    <property type="molecule type" value="Genomic_DNA"/>
</dbReference>
<dbReference type="RefSeq" id="WP_011345172.1">
    <property type="nucleotide sequence ID" value="NC_007503.1"/>
</dbReference>
<dbReference type="SMR" id="Q3A9T5"/>
<dbReference type="FunCoup" id="Q3A9T5">
    <property type="interactions" value="467"/>
</dbReference>
<dbReference type="STRING" id="246194.CHY_2290"/>
<dbReference type="KEGG" id="chy:CHY_2290"/>
<dbReference type="eggNOG" id="COG0200">
    <property type="taxonomic scope" value="Bacteria"/>
</dbReference>
<dbReference type="HOGENOM" id="CLU_055188_4_2_9"/>
<dbReference type="InParanoid" id="Q3A9T5"/>
<dbReference type="OrthoDB" id="9810293at2"/>
<dbReference type="Proteomes" id="UP000002706">
    <property type="component" value="Chromosome"/>
</dbReference>
<dbReference type="GO" id="GO:0022625">
    <property type="term" value="C:cytosolic large ribosomal subunit"/>
    <property type="evidence" value="ECO:0007669"/>
    <property type="project" value="TreeGrafter"/>
</dbReference>
<dbReference type="GO" id="GO:0019843">
    <property type="term" value="F:rRNA binding"/>
    <property type="evidence" value="ECO:0007669"/>
    <property type="project" value="UniProtKB-UniRule"/>
</dbReference>
<dbReference type="GO" id="GO:0003735">
    <property type="term" value="F:structural constituent of ribosome"/>
    <property type="evidence" value="ECO:0007669"/>
    <property type="project" value="InterPro"/>
</dbReference>
<dbReference type="GO" id="GO:0006412">
    <property type="term" value="P:translation"/>
    <property type="evidence" value="ECO:0007669"/>
    <property type="project" value="UniProtKB-UniRule"/>
</dbReference>
<dbReference type="Gene3D" id="3.100.10.10">
    <property type="match status" value="1"/>
</dbReference>
<dbReference type="HAMAP" id="MF_01341">
    <property type="entry name" value="Ribosomal_uL15"/>
    <property type="match status" value="1"/>
</dbReference>
<dbReference type="InterPro" id="IPR030878">
    <property type="entry name" value="Ribosomal_uL15"/>
</dbReference>
<dbReference type="InterPro" id="IPR021131">
    <property type="entry name" value="Ribosomal_uL15/eL18"/>
</dbReference>
<dbReference type="InterPro" id="IPR036227">
    <property type="entry name" value="Ribosomal_uL15/eL18_sf"/>
</dbReference>
<dbReference type="InterPro" id="IPR005749">
    <property type="entry name" value="Ribosomal_uL15_bac-type"/>
</dbReference>
<dbReference type="InterPro" id="IPR001196">
    <property type="entry name" value="Ribosomal_uL15_CS"/>
</dbReference>
<dbReference type="NCBIfam" id="TIGR01071">
    <property type="entry name" value="rplO_bact"/>
    <property type="match status" value="1"/>
</dbReference>
<dbReference type="PANTHER" id="PTHR12934">
    <property type="entry name" value="50S RIBOSOMAL PROTEIN L15"/>
    <property type="match status" value="1"/>
</dbReference>
<dbReference type="PANTHER" id="PTHR12934:SF11">
    <property type="entry name" value="LARGE RIBOSOMAL SUBUNIT PROTEIN UL15M"/>
    <property type="match status" value="1"/>
</dbReference>
<dbReference type="Pfam" id="PF00828">
    <property type="entry name" value="Ribosomal_L27A"/>
    <property type="match status" value="1"/>
</dbReference>
<dbReference type="SUPFAM" id="SSF52080">
    <property type="entry name" value="Ribosomal proteins L15p and L18e"/>
    <property type="match status" value="1"/>
</dbReference>
<dbReference type="PROSITE" id="PS00475">
    <property type="entry name" value="RIBOSOMAL_L15"/>
    <property type="match status" value="1"/>
</dbReference>
<keyword id="KW-1185">Reference proteome</keyword>
<keyword id="KW-0687">Ribonucleoprotein</keyword>
<keyword id="KW-0689">Ribosomal protein</keyword>
<keyword id="KW-0694">RNA-binding</keyword>
<keyword id="KW-0699">rRNA-binding</keyword>
<comment type="function">
    <text evidence="1">Binds to the 23S rRNA.</text>
</comment>
<comment type="subunit">
    <text evidence="1">Part of the 50S ribosomal subunit.</text>
</comment>
<comment type="similarity">
    <text evidence="1">Belongs to the universal ribosomal protein uL15 family.</text>
</comment>
<evidence type="ECO:0000255" key="1">
    <source>
        <dbReference type="HAMAP-Rule" id="MF_01341"/>
    </source>
</evidence>
<evidence type="ECO:0000256" key="2">
    <source>
        <dbReference type="SAM" id="MobiDB-lite"/>
    </source>
</evidence>
<evidence type="ECO:0000305" key="3"/>